<protein>
    <recommendedName>
        <fullName evidence="1">Global transcriptional regulator CodY</fullName>
    </recommendedName>
</protein>
<accession>C1EP52</accession>
<comment type="function">
    <text evidence="1">DNA-binding global transcriptional regulator which is involved in the adaptive response to starvation and acts by directly or indirectly controlling the expression of numerous genes in response to nutrient availability. During rapid exponential growth, CodY is highly active and represses genes whose products allow adaptation to nutrient depletion.</text>
</comment>
<comment type="subcellular location">
    <subcellularLocation>
        <location evidence="1">Cytoplasm</location>
    </subcellularLocation>
</comment>
<comment type="similarity">
    <text evidence="1">Belongs to the CodY family.</text>
</comment>
<dbReference type="EMBL" id="CP001407">
    <property type="protein sequence ID" value="ACO25892.1"/>
    <property type="molecule type" value="Genomic_DNA"/>
</dbReference>
<dbReference type="RefSeq" id="WP_000421288.1">
    <property type="nucleotide sequence ID" value="NZ_CP009318.1"/>
</dbReference>
<dbReference type="SMR" id="C1EP52"/>
<dbReference type="GeneID" id="83637535"/>
<dbReference type="KEGG" id="bcx:BCA_3927"/>
<dbReference type="PATRIC" id="fig|572264.18.peg.3884"/>
<dbReference type="Proteomes" id="UP000002210">
    <property type="component" value="Chromosome"/>
</dbReference>
<dbReference type="GO" id="GO:0005737">
    <property type="term" value="C:cytoplasm"/>
    <property type="evidence" value="ECO:0007669"/>
    <property type="project" value="UniProtKB-SubCell"/>
</dbReference>
<dbReference type="GO" id="GO:0003677">
    <property type="term" value="F:DNA binding"/>
    <property type="evidence" value="ECO:0007669"/>
    <property type="project" value="UniProtKB-UniRule"/>
</dbReference>
<dbReference type="GO" id="GO:0003700">
    <property type="term" value="F:DNA-binding transcription factor activity"/>
    <property type="evidence" value="ECO:0007669"/>
    <property type="project" value="InterPro"/>
</dbReference>
<dbReference type="GO" id="GO:0005525">
    <property type="term" value="F:GTP binding"/>
    <property type="evidence" value="ECO:0007669"/>
    <property type="project" value="InterPro"/>
</dbReference>
<dbReference type="GO" id="GO:0045892">
    <property type="term" value="P:negative regulation of DNA-templated transcription"/>
    <property type="evidence" value="ECO:0007669"/>
    <property type="project" value="UniProtKB-UniRule"/>
</dbReference>
<dbReference type="FunFam" id="1.10.10.10:FF:000034">
    <property type="entry name" value="GTP-sensing transcriptional pleiotropic repressor CodY"/>
    <property type="match status" value="1"/>
</dbReference>
<dbReference type="FunFam" id="3.30.450.40:FF:000003">
    <property type="entry name" value="GTP-sensing transcriptional pleiotropic repressor CodY"/>
    <property type="match status" value="1"/>
</dbReference>
<dbReference type="Gene3D" id="3.30.450.40">
    <property type="match status" value="1"/>
</dbReference>
<dbReference type="Gene3D" id="1.10.10.10">
    <property type="entry name" value="Winged helix-like DNA-binding domain superfamily/Winged helix DNA-binding domain"/>
    <property type="match status" value="1"/>
</dbReference>
<dbReference type="HAMAP" id="MF_00621">
    <property type="entry name" value="HTH_type_CodY"/>
    <property type="match status" value="1"/>
</dbReference>
<dbReference type="InterPro" id="IPR014154">
    <property type="entry name" value="CodY"/>
</dbReference>
<dbReference type="InterPro" id="IPR029016">
    <property type="entry name" value="GAF-like_dom_sf"/>
</dbReference>
<dbReference type="InterPro" id="IPR013198">
    <property type="entry name" value="GTP_trans_reg_CodY_C"/>
</dbReference>
<dbReference type="InterPro" id="IPR010312">
    <property type="entry name" value="Transc_reg_CodY_N"/>
</dbReference>
<dbReference type="InterPro" id="IPR036388">
    <property type="entry name" value="WH-like_DNA-bd_sf"/>
</dbReference>
<dbReference type="InterPro" id="IPR036390">
    <property type="entry name" value="WH_DNA-bd_sf"/>
</dbReference>
<dbReference type="NCBIfam" id="TIGR02787">
    <property type="entry name" value="codY_Gpos"/>
    <property type="match status" value="1"/>
</dbReference>
<dbReference type="NCBIfam" id="NF003170">
    <property type="entry name" value="PRK04158.1"/>
    <property type="match status" value="1"/>
</dbReference>
<dbReference type="PANTHER" id="PTHR40062:SF1">
    <property type="entry name" value="GLOBAL TRANSCRIPTIONAL REGULATOR CODY"/>
    <property type="match status" value="1"/>
</dbReference>
<dbReference type="PANTHER" id="PTHR40062">
    <property type="entry name" value="GTP-SENSING TRANSCRIPTIONAL PLEIOTROPIC REPRESSOR CODY"/>
    <property type="match status" value="1"/>
</dbReference>
<dbReference type="Pfam" id="PF06018">
    <property type="entry name" value="CodY"/>
    <property type="match status" value="1"/>
</dbReference>
<dbReference type="Pfam" id="PF08222">
    <property type="entry name" value="HTH_CodY"/>
    <property type="match status" value="1"/>
</dbReference>
<dbReference type="PIRSF" id="PIRSF011572">
    <property type="entry name" value="GTP_sensing_CodY"/>
    <property type="match status" value="1"/>
</dbReference>
<dbReference type="SUPFAM" id="SSF46785">
    <property type="entry name" value="Winged helix' DNA-binding domain"/>
    <property type="match status" value="1"/>
</dbReference>
<name>CODY_BACC3</name>
<keyword id="KW-0963">Cytoplasm</keyword>
<keyword id="KW-0238">DNA-binding</keyword>
<keyword id="KW-0597">Phosphoprotein</keyword>
<keyword id="KW-0678">Repressor</keyword>
<keyword id="KW-0804">Transcription</keyword>
<keyword id="KW-0805">Transcription regulation</keyword>
<proteinExistence type="inferred from homology"/>
<reference key="1">
    <citation type="submission" date="2009-02" db="EMBL/GenBank/DDBJ databases">
        <title>Genome sequence of Bacillus cereus 03BB102.</title>
        <authorList>
            <person name="Dodson R.J."/>
            <person name="Jackson P."/>
            <person name="Munk A.C."/>
            <person name="Brettin T."/>
            <person name="Bruce D."/>
            <person name="Detter C."/>
            <person name="Tapia R."/>
            <person name="Han C."/>
            <person name="Sutton G."/>
            <person name="Sims D."/>
        </authorList>
    </citation>
    <scope>NUCLEOTIDE SEQUENCE [LARGE SCALE GENOMIC DNA]</scope>
    <source>
        <strain>03BB102</strain>
    </source>
</reference>
<evidence type="ECO:0000255" key="1">
    <source>
        <dbReference type="HAMAP-Rule" id="MF_00621"/>
    </source>
</evidence>
<organism>
    <name type="scientific">Bacillus cereus (strain 03BB102)</name>
    <dbReference type="NCBI Taxonomy" id="572264"/>
    <lineage>
        <taxon>Bacteria</taxon>
        <taxon>Bacillati</taxon>
        <taxon>Bacillota</taxon>
        <taxon>Bacilli</taxon>
        <taxon>Bacillales</taxon>
        <taxon>Bacillaceae</taxon>
        <taxon>Bacillus</taxon>
        <taxon>Bacillus cereus group</taxon>
    </lineage>
</organism>
<sequence length="259" mass="28774">MELLAKTRKLNALLQSAAGKPVNFREMSDTMCEVIEANVFVVSRRGKLLGYAIHQQIENERMKQMLAERQFPEEYTQSLFNITETSSNLDVNSAYTAFPVENKELFGQGLTTIVPIVGGGERLGTLVLARLGQEFLDDDLILAEYSSTVVGMEILREKAEEIEEEARSKAVVQMAISSLSYSELEAIEHIFEELNGTEGLLVASKIADRVGITRSVIVNALRKLESAGVIESRSLGMKGTYIKVLNDKFLHELAKLKTN</sequence>
<gene>
    <name evidence="1" type="primary">codY</name>
    <name type="ordered locus">BCA_3927</name>
</gene>
<feature type="chain" id="PRO_1000147200" description="Global transcriptional regulator CodY">
    <location>
        <begin position="1"/>
        <end position="259"/>
    </location>
</feature>
<feature type="DNA-binding region" description="H-T-H motif" evidence="1">
    <location>
        <begin position="203"/>
        <end position="222"/>
    </location>
</feature>
<feature type="region of interest" description="GAF domain" evidence="1">
    <location>
        <begin position="1"/>
        <end position="155"/>
    </location>
</feature>
<feature type="modified residue" description="Phosphoserine" evidence="1">
    <location>
        <position position="215"/>
    </location>
</feature>